<sequence>MEIAFLNSLVVTSPGFYKAEKITLDEVKQWLKHYDGRYKSFIGHKSTAQFLQKLLGIRIEQNRKTFRHMKYQKAICFSLYERYPENVLLTQRDLEKARYQFYLLTRLD</sequence>
<accession>P96643</accession>
<feature type="chain" id="PRO_0000049497" description="Uncharacterized protein YddF">
    <location>
        <begin position="1"/>
        <end position="108"/>
    </location>
</feature>
<proteinExistence type="predicted"/>
<dbReference type="EMBL" id="AB001488">
    <property type="protein sequence ID" value="BAA19332.1"/>
    <property type="molecule type" value="Genomic_DNA"/>
</dbReference>
<dbReference type="EMBL" id="AL009126">
    <property type="protein sequence ID" value="CAB12302.1"/>
    <property type="molecule type" value="Genomic_DNA"/>
</dbReference>
<dbReference type="PIR" id="G69775">
    <property type="entry name" value="G69775"/>
</dbReference>
<dbReference type="RefSeq" id="NP_388376.1">
    <property type="nucleotide sequence ID" value="NC_000964.3"/>
</dbReference>
<dbReference type="RefSeq" id="WP_009966630.1">
    <property type="nucleotide sequence ID" value="NZ_OZ025638.1"/>
</dbReference>
<dbReference type="SMR" id="P96643"/>
<dbReference type="FunCoup" id="P96643">
    <property type="interactions" value="82"/>
</dbReference>
<dbReference type="STRING" id="224308.BSU04950"/>
<dbReference type="PaxDb" id="224308-BSU04950"/>
<dbReference type="EnsemblBacteria" id="CAB12302">
    <property type="protein sequence ID" value="CAB12302"/>
    <property type="gene ID" value="BSU_04950"/>
</dbReference>
<dbReference type="GeneID" id="938143"/>
<dbReference type="KEGG" id="bsu:BSU04950"/>
<dbReference type="PATRIC" id="fig|224308.179.peg.526"/>
<dbReference type="eggNOG" id="ENOG5032Z9E">
    <property type="taxonomic scope" value="Bacteria"/>
</dbReference>
<dbReference type="InParanoid" id="P96643"/>
<dbReference type="OrthoDB" id="2867744at2"/>
<dbReference type="BioCyc" id="BSUB:BSU04950-MONOMER"/>
<dbReference type="Proteomes" id="UP000001570">
    <property type="component" value="Chromosome"/>
</dbReference>
<dbReference type="Gene3D" id="3.40.50.11170">
    <property type="entry name" value="Uncharacterised protein PF08960, DUF1874"/>
    <property type="match status" value="1"/>
</dbReference>
<dbReference type="InterPro" id="IPR015055">
    <property type="entry name" value="STIV_B116-like"/>
</dbReference>
<dbReference type="InterPro" id="IPR037236">
    <property type="entry name" value="STIV_B116-like_sf"/>
</dbReference>
<dbReference type="Pfam" id="PF08960">
    <property type="entry name" value="STIV_B116-like"/>
    <property type="match status" value="1"/>
</dbReference>
<dbReference type="SUPFAM" id="SSF143602">
    <property type="entry name" value="STIV B116-like"/>
    <property type="match status" value="1"/>
</dbReference>
<name>YDDF_BACSU</name>
<keyword id="KW-1185">Reference proteome</keyword>
<gene>
    <name type="primary">yddF</name>
    <name type="ordered locus">BSU04950</name>
</gene>
<reference key="1">
    <citation type="submission" date="1997-03" db="EMBL/GenBank/DDBJ databases">
        <title>A 148 kbp sequence of the region between 35 and 47 degree of the Bacillus subtilis genome.</title>
        <authorList>
            <person name="Kasahara Y."/>
            <person name="Nakai S."/>
            <person name="Lee S."/>
            <person name="Sadaie Y."/>
            <person name="Ogasawara N."/>
        </authorList>
    </citation>
    <scope>NUCLEOTIDE SEQUENCE [GENOMIC DNA]</scope>
    <source>
        <strain>168</strain>
    </source>
</reference>
<reference key="2">
    <citation type="journal article" date="1997" name="Nature">
        <title>The complete genome sequence of the Gram-positive bacterium Bacillus subtilis.</title>
        <authorList>
            <person name="Kunst F."/>
            <person name="Ogasawara N."/>
            <person name="Moszer I."/>
            <person name="Albertini A.M."/>
            <person name="Alloni G."/>
            <person name="Azevedo V."/>
            <person name="Bertero M.G."/>
            <person name="Bessieres P."/>
            <person name="Bolotin A."/>
            <person name="Borchert S."/>
            <person name="Borriss R."/>
            <person name="Boursier L."/>
            <person name="Brans A."/>
            <person name="Braun M."/>
            <person name="Brignell S.C."/>
            <person name="Bron S."/>
            <person name="Brouillet S."/>
            <person name="Bruschi C.V."/>
            <person name="Caldwell B."/>
            <person name="Capuano V."/>
            <person name="Carter N.M."/>
            <person name="Choi S.-K."/>
            <person name="Codani J.-J."/>
            <person name="Connerton I.F."/>
            <person name="Cummings N.J."/>
            <person name="Daniel R.A."/>
            <person name="Denizot F."/>
            <person name="Devine K.M."/>
            <person name="Duesterhoeft A."/>
            <person name="Ehrlich S.D."/>
            <person name="Emmerson P.T."/>
            <person name="Entian K.-D."/>
            <person name="Errington J."/>
            <person name="Fabret C."/>
            <person name="Ferrari E."/>
            <person name="Foulger D."/>
            <person name="Fritz C."/>
            <person name="Fujita M."/>
            <person name="Fujita Y."/>
            <person name="Fuma S."/>
            <person name="Galizzi A."/>
            <person name="Galleron N."/>
            <person name="Ghim S.-Y."/>
            <person name="Glaser P."/>
            <person name="Goffeau A."/>
            <person name="Golightly E.J."/>
            <person name="Grandi G."/>
            <person name="Guiseppi G."/>
            <person name="Guy B.J."/>
            <person name="Haga K."/>
            <person name="Haiech J."/>
            <person name="Harwood C.R."/>
            <person name="Henaut A."/>
            <person name="Hilbert H."/>
            <person name="Holsappel S."/>
            <person name="Hosono S."/>
            <person name="Hullo M.-F."/>
            <person name="Itaya M."/>
            <person name="Jones L.-M."/>
            <person name="Joris B."/>
            <person name="Karamata D."/>
            <person name="Kasahara Y."/>
            <person name="Klaerr-Blanchard M."/>
            <person name="Klein C."/>
            <person name="Kobayashi Y."/>
            <person name="Koetter P."/>
            <person name="Koningstein G."/>
            <person name="Krogh S."/>
            <person name="Kumano M."/>
            <person name="Kurita K."/>
            <person name="Lapidus A."/>
            <person name="Lardinois S."/>
            <person name="Lauber J."/>
            <person name="Lazarevic V."/>
            <person name="Lee S.-M."/>
            <person name="Levine A."/>
            <person name="Liu H."/>
            <person name="Masuda S."/>
            <person name="Mauel C."/>
            <person name="Medigue C."/>
            <person name="Medina N."/>
            <person name="Mellado R.P."/>
            <person name="Mizuno M."/>
            <person name="Moestl D."/>
            <person name="Nakai S."/>
            <person name="Noback M."/>
            <person name="Noone D."/>
            <person name="O'Reilly M."/>
            <person name="Ogawa K."/>
            <person name="Ogiwara A."/>
            <person name="Oudega B."/>
            <person name="Park S.-H."/>
            <person name="Parro V."/>
            <person name="Pohl T.M."/>
            <person name="Portetelle D."/>
            <person name="Porwollik S."/>
            <person name="Prescott A.M."/>
            <person name="Presecan E."/>
            <person name="Pujic P."/>
            <person name="Purnelle B."/>
            <person name="Rapoport G."/>
            <person name="Rey M."/>
            <person name="Reynolds S."/>
            <person name="Rieger M."/>
            <person name="Rivolta C."/>
            <person name="Rocha E."/>
            <person name="Roche B."/>
            <person name="Rose M."/>
            <person name="Sadaie Y."/>
            <person name="Sato T."/>
            <person name="Scanlan E."/>
            <person name="Schleich S."/>
            <person name="Schroeter R."/>
            <person name="Scoffone F."/>
            <person name="Sekiguchi J."/>
            <person name="Sekowska A."/>
            <person name="Seror S.J."/>
            <person name="Serror P."/>
            <person name="Shin B.-S."/>
            <person name="Soldo B."/>
            <person name="Sorokin A."/>
            <person name="Tacconi E."/>
            <person name="Takagi T."/>
            <person name="Takahashi H."/>
            <person name="Takemaru K."/>
            <person name="Takeuchi M."/>
            <person name="Tamakoshi A."/>
            <person name="Tanaka T."/>
            <person name="Terpstra P."/>
            <person name="Tognoni A."/>
            <person name="Tosato V."/>
            <person name="Uchiyama S."/>
            <person name="Vandenbol M."/>
            <person name="Vannier F."/>
            <person name="Vassarotti A."/>
            <person name="Viari A."/>
            <person name="Wambutt R."/>
            <person name="Wedler E."/>
            <person name="Wedler H."/>
            <person name="Weitzenegger T."/>
            <person name="Winters P."/>
            <person name="Wipat A."/>
            <person name="Yamamoto H."/>
            <person name="Yamane K."/>
            <person name="Yasumoto K."/>
            <person name="Yata K."/>
            <person name="Yoshida K."/>
            <person name="Yoshikawa H.-F."/>
            <person name="Zumstein E."/>
            <person name="Yoshikawa H."/>
            <person name="Danchin A."/>
        </authorList>
    </citation>
    <scope>NUCLEOTIDE SEQUENCE [LARGE SCALE GENOMIC DNA]</scope>
    <source>
        <strain>168</strain>
    </source>
</reference>
<organism>
    <name type="scientific">Bacillus subtilis (strain 168)</name>
    <dbReference type="NCBI Taxonomy" id="224308"/>
    <lineage>
        <taxon>Bacteria</taxon>
        <taxon>Bacillati</taxon>
        <taxon>Bacillota</taxon>
        <taxon>Bacilli</taxon>
        <taxon>Bacillales</taxon>
        <taxon>Bacillaceae</taxon>
        <taxon>Bacillus</taxon>
    </lineage>
</organism>
<protein>
    <recommendedName>
        <fullName>Uncharacterized protein YddF</fullName>
    </recommendedName>
</protein>